<comment type="function">
    <text evidence="2 3 4 8">A factor required for optimal assembly of photosystem II (PSII) which acts in the early stages of PSII assembly. Also plays a role in replacement of photodamaged D1 (psbA) (PubMed:18550538). May interact with precursor D1 to prevent its premature processing before association with D2 (psbD) (Probable) (PubMed:18550538). May also play a role in chlorophyll insertion into chlorophyll-binding proteins (Probable) (PubMed:18550538). Increasing levels of chlorophyll precursors partially suppresses deletion of this protein, supporting the idea that Ycf48 assists YidC in synthesis of chlorophyll-binding proteins (PubMed:30061392). The Ycf39-Hlip complex binds D1 at an early stage of PSII assembly along with Ycf48, ribosomes and ChlG, the last enzyme in chlorophyll biosynthesis; it may be involved in chlorophyll reuse and delivery to D1 in the initial stages of PSII assembly (PubMed:24681620).</text>
</comment>
<comment type="subunit">
    <text evidence="2 3 4">Part of early PSII assembly complexes which includes D1 (psbA) and PsbI; not found in mature PSII. By two-hybrid analysis in yeast interacts with precursor and intermediate forms of D1, but less with mature D1 (PubMed:18550538). Binds to the lumenal side of PSI and PSII complexes. Coimmunoprecipitates with YidC (PubMed:30061392). Purified chlorophyll- and carotenoid-containing photosystem II (PSII) assembly intermediate complex RCII* (iD1, D1, D2, PsbE, PsbF, PsbI, Ycf39, Ycf48, HliC and HliD) (PubMed:24681620).</text>
</comment>
<comment type="subcellular location">
    <subcellularLocation>
        <location evidence="1 2 3 5">Cellular thylakoid membrane</location>
        <topology evidence="5">Lipid-anchor</topology>
        <orientation evidence="4">Lumenal side</orientation>
    </subcellularLocation>
    <text evidence="1 4">Associated with a PSII precusor complex on the lumenal side of the thylakoid membrane.</text>
</comment>
<comment type="domain">
    <text evidence="4">Eukaryotic orthologs often have inserts compared to cyanobacteria; insertion of a 19-residue sequence from C.merolae into the same position in this protein (at Val-176) has no visible effect on function. An Arg-rich patch composed of 4 residues on the 'top surface' of blades 4 and 5 is important for binding to assembling PSII centers; mutating each Arg residue individually has no phenotype whereas none of the triple mutants grow in high light (90-130 umol photon/m(2)/s), suggesting more than one residue is involved in binding to the lumenal side of assembling PSII centers.</text>
</comment>
<comment type="domain">
    <text evidence="1">A 7-bladed beta-propeller torus, about 55 by 55 Angstroms, with a depth of about 25 Angstroms and a central pore.</text>
</comment>
<comment type="PTM">
    <text evidence="5">The last 3 residues are removed in the mature protein.</text>
</comment>
<comment type="mass spectrometry" mass="33689.1" method="MALDI" evidence="5">
    <text>Modified with diacylglycerol and acylation on Cys-29, with last 3 residues removed.</text>
</comment>
<comment type="mass spectrometry" mass="33428.1" method="MALDI" evidence="5">
    <text>Single fatty acid on Cys-29, with last 3 residues removed.</text>
</comment>
<comment type="disruption phenotype">
    <text evidence="2 4">Grows significantly slower than wild-type, 30-50% reduction in functional PSII, decreased chlorophyll content, significantly reduced replacement of photodamaged D1 (psbA) (PubMed:18550538). Grows poorly on low light (40-50 umol photon/m(2)/s) and not on higher light, reduced chlorophyll, increased levels of unassembled D1, substantially reduced levels of chlorophyll precursors (PubMed:30061392).</text>
</comment>
<comment type="similarity">
    <text evidence="1">Belongs to the Ycf48 family.</text>
</comment>
<gene>
    <name evidence="1 7" type="primary">ycf48</name>
    <name type="ordered locus">slr2034</name>
</gene>
<accession>P73069</accession>
<organism>
    <name type="scientific">Synechocystis sp. (strain ATCC 27184 / PCC 6803 / Kazusa)</name>
    <dbReference type="NCBI Taxonomy" id="1111708"/>
    <lineage>
        <taxon>Bacteria</taxon>
        <taxon>Bacillati</taxon>
        <taxon>Cyanobacteriota</taxon>
        <taxon>Cyanophyceae</taxon>
        <taxon>Synechococcales</taxon>
        <taxon>Merismopediaceae</taxon>
        <taxon>Synechocystis</taxon>
    </lineage>
</organism>
<proteinExistence type="evidence at protein level"/>
<evidence type="ECO:0000255" key="1">
    <source>
        <dbReference type="HAMAP-Rule" id="MF_01348"/>
    </source>
</evidence>
<evidence type="ECO:0000269" key="2">
    <source>
    </source>
</evidence>
<evidence type="ECO:0000269" key="3">
    <source>
    </source>
</evidence>
<evidence type="ECO:0000269" key="4">
    <source>
    </source>
</evidence>
<evidence type="ECO:0000269" key="5">
    <source>
    </source>
</evidence>
<evidence type="ECO:0000303" key="6">
    <source>
    </source>
</evidence>
<evidence type="ECO:0000303" key="7">
    <source>
    </source>
</evidence>
<evidence type="ECO:0000305" key="8">
    <source>
    </source>
</evidence>
<evidence type="ECO:0000305" key="9">
    <source>
    </source>
</evidence>
<evidence type="ECO:0007829" key="10">
    <source>
        <dbReference type="PDB" id="8AM5"/>
    </source>
</evidence>
<evidence type="ECO:0007829" key="11">
    <source>
        <dbReference type="PDB" id="8ASL"/>
    </source>
</evidence>
<dbReference type="EMBL" id="BA000022">
    <property type="protein sequence ID" value="BAA17091.1"/>
    <property type="molecule type" value="Genomic_DNA"/>
</dbReference>
<dbReference type="PIR" id="S75177">
    <property type="entry name" value="S75177"/>
</dbReference>
<dbReference type="PDB" id="8AM5">
    <property type="method" value="EM"/>
    <property type="resolution" value="3.10 A"/>
    <property type="chains" value="S=1-342"/>
</dbReference>
<dbReference type="PDB" id="8ASL">
    <property type="method" value="EM"/>
    <property type="resolution" value="3.15 A"/>
    <property type="chains" value="S=1-342"/>
</dbReference>
<dbReference type="PDBsum" id="8AM5"/>
<dbReference type="PDBsum" id="8ASL"/>
<dbReference type="EMDB" id="EMD-15522"/>
<dbReference type="EMDB" id="EMD-15618"/>
<dbReference type="SMR" id="P73069"/>
<dbReference type="IntAct" id="P73069">
    <property type="interactions" value="4"/>
</dbReference>
<dbReference type="STRING" id="1148.gene:10497952"/>
<dbReference type="PaxDb" id="1148-1652167"/>
<dbReference type="EnsemblBacteria" id="BAA17091">
    <property type="protein sequence ID" value="BAA17091"/>
    <property type="gene ID" value="BAA17091"/>
</dbReference>
<dbReference type="KEGG" id="syn:slr2034"/>
<dbReference type="eggNOG" id="COG4447">
    <property type="taxonomic scope" value="Bacteria"/>
</dbReference>
<dbReference type="InParanoid" id="P73069"/>
<dbReference type="PhylomeDB" id="P73069"/>
<dbReference type="Proteomes" id="UP000001425">
    <property type="component" value="Chromosome"/>
</dbReference>
<dbReference type="GO" id="GO:0009523">
    <property type="term" value="C:photosystem II"/>
    <property type="evidence" value="ECO:0007669"/>
    <property type="project" value="UniProtKB-KW"/>
</dbReference>
<dbReference type="GO" id="GO:0031676">
    <property type="term" value="C:plasma membrane-derived thylakoid membrane"/>
    <property type="evidence" value="ECO:0007669"/>
    <property type="project" value="UniProtKB-SubCell"/>
</dbReference>
<dbReference type="GO" id="GO:0031977">
    <property type="term" value="C:thylakoid lumen"/>
    <property type="evidence" value="ECO:0007669"/>
    <property type="project" value="UniProtKB-UniRule"/>
</dbReference>
<dbReference type="GO" id="GO:0010207">
    <property type="term" value="P:photosystem II assembly"/>
    <property type="evidence" value="ECO:0000315"/>
    <property type="project" value="UniProtKB"/>
</dbReference>
<dbReference type="Gene3D" id="2.130.10.10">
    <property type="entry name" value="YVTN repeat-like/Quinoprotein amine dehydrogenase"/>
    <property type="match status" value="2"/>
</dbReference>
<dbReference type="HAMAP" id="MF_01348">
    <property type="entry name" value="Ycf48"/>
    <property type="match status" value="1"/>
</dbReference>
<dbReference type="InterPro" id="IPR028203">
    <property type="entry name" value="PSII_CF48-like_dom"/>
</dbReference>
<dbReference type="InterPro" id="IPR015943">
    <property type="entry name" value="WD40/YVTN_repeat-like_dom_sf"/>
</dbReference>
<dbReference type="InterPro" id="IPR016705">
    <property type="entry name" value="Ycf48/Hcf136"/>
</dbReference>
<dbReference type="NCBIfam" id="NF010237">
    <property type="entry name" value="PRK13684.1"/>
    <property type="match status" value="1"/>
</dbReference>
<dbReference type="PANTHER" id="PTHR47199">
    <property type="entry name" value="PHOTOSYSTEM II STABILITY/ASSEMBLY FACTOR HCF136, CHLOROPLASTIC"/>
    <property type="match status" value="1"/>
</dbReference>
<dbReference type="PANTHER" id="PTHR47199:SF2">
    <property type="entry name" value="PHOTOSYSTEM II STABILITY_ASSEMBLY FACTOR HCF136, CHLOROPLASTIC"/>
    <property type="match status" value="1"/>
</dbReference>
<dbReference type="Pfam" id="PF14870">
    <property type="entry name" value="PSII_BNR"/>
    <property type="match status" value="1"/>
</dbReference>
<dbReference type="PIRSF" id="PIRSF017875">
    <property type="entry name" value="PSII_HCF136"/>
    <property type="match status" value="1"/>
</dbReference>
<dbReference type="SUPFAM" id="SSF110296">
    <property type="entry name" value="Oligoxyloglucan reducing end-specific cellobiohydrolase"/>
    <property type="match status" value="1"/>
</dbReference>
<sequence length="342" mass="37291">MPVKFPSLKFEQLKQLVLVAAIAVFCVSCSHVPDLAFNPWQEIALETDSTFADIAFTEDPNHGWLVGTKETIFETTDGGDTWEQKLIDLGEEKASFSAVSFSGNEGWITGKPSILLHTTDGGQTWARIPLSEKLPGAPYSIIALGPQTAEMITDLGAIYKTTNGGKNWKALVEGAVGVARTIQRSTDGRYVAVSARGNFYSTWAPGQTEWTPHNRNSSRRLQTMGYGKDGQLWLLARGGQLQFSTDPDAEEWSDVIAPQDKGSWGLLDLSFRTPEEVWVAGASGNLLMSQDGGQTWAKDTGVEDIPANLYRVVFLSPEKGFVLGQDGILLKYNPSTEVAMVP</sequence>
<protein>
    <recommendedName>
        <fullName evidence="1 6">Photosystem II assembly lipoprotein Ycf48</fullName>
    </recommendedName>
</protein>
<feature type="signal peptide" evidence="1">
    <location>
        <begin position="1"/>
        <end position="28"/>
    </location>
</feature>
<feature type="chain" id="PRO_0000217373" description="Photosystem II assembly lipoprotein Ycf48" evidence="5">
    <location>
        <begin position="29"/>
        <end position="339"/>
    </location>
</feature>
<feature type="propeptide" id="PRO_0000456141" evidence="5">
    <location>
        <begin position="340"/>
        <end position="342"/>
    </location>
</feature>
<feature type="short sequence motif" description="Arg-rich patch" evidence="4">
    <location>
        <begin position="196"/>
        <end position="220"/>
    </location>
</feature>
<feature type="lipid moiety-binding region" description="N-palmitoyl cysteine" evidence="9">
    <location>
        <position position="29"/>
    </location>
</feature>
<feature type="lipid moiety-binding region" description="S-diacylglycerol cysteine" evidence="9">
    <location>
        <position position="29"/>
    </location>
</feature>
<feature type="mutagenesis site" description="Almost complete loss of thylakoid targeting, normal autotrophic and photoheterotrophic growth." evidence="5">
    <original>CVSC</original>
    <variation>AVSA</variation>
    <location>
        <begin position="26"/>
        <end position="29"/>
    </location>
</feature>
<feature type="mutagenesis site" description="No change in thylakoid targeting, normal autotrophic and photoheterotrophic growth." evidence="5">
    <original>C</original>
    <variation>A</variation>
    <location>
        <position position="26"/>
    </location>
</feature>
<feature type="mutagenesis site" description="Almost complete loss of thylakoid targeting, normal autotrophic and photoheterotrophic growth." evidence="5">
    <original>C</original>
    <variation>A</variation>
    <location>
        <position position="29"/>
    </location>
</feature>
<feature type="mutagenesis site" description="Behaves like wild-type, has insert of C.merolae." evidence="4">
    <original>V</original>
    <variation>VDATLNRTISSGITGASYFTG</variation>
    <location>
        <position position="176"/>
    </location>
</feature>
<feature type="mutagenesis site" description="Not as extreme effect as mutating same residues to E, unable to grow in high light (90-130 umol photon/m(2)/s), replaces Arg-patch with Ala." evidence="4">
    <original>RGNFYSTWAPGQTEWTPHNRNSSRR</original>
    <variation>AGNFYSTWAPGQTEWTPHNANSSAA</variation>
    <location>
        <begin position="196"/>
        <end position="220"/>
    </location>
</feature>
<feature type="mutagenesis site" description="Decreased chlorophyll content, unable to grow in medium light (70-90 umol photon/m(2)/s), impaired assembly of PS complexes, does not bind PSI or PSII, replaces Arg-patch with Glu." evidence="4">
    <original>RGNFYSTWAPGQTEWTPHNRNSSRR</original>
    <variation>EGNFYSTWAPGQTEWTPHNENSSEE</variation>
    <location>
        <begin position="196"/>
        <end position="220"/>
    </location>
</feature>
<feature type="mutagenesis site" description="Grows very poorly in medium light (70-90 umol photon/m(2)/(s)), replaces first 3 residues of Arg-patch." evidence="4">
    <original>RGNFYSTWAPGQTEWTPHNRNSSR</original>
    <variation>EGNFYSTWAPGQTEWTPHNENSSE</variation>
    <location>
        <begin position="196"/>
        <end position="219"/>
    </location>
</feature>
<feature type="mutagenesis site" description="No visible phenotype." evidence="4">
    <original>R</original>
    <variation>E</variation>
    <location>
        <position position="196"/>
    </location>
</feature>
<feature type="mutagenesis site" description="Grows very poorly in medium light (70-90 umol photon/m(2)/(s)), replaces last 3 residues of Arg-patch." evidence="4">
    <original>RNSSRR</original>
    <variation>ENSEE</variation>
    <location>
        <begin position="215"/>
        <end position="220"/>
    </location>
</feature>
<feature type="mutagenesis site" description="No visible phenotype." evidence="4">
    <original>R</original>
    <variation>E</variation>
    <location>
        <position position="215"/>
    </location>
</feature>
<feature type="mutagenesis site" description="No visible phenotype." evidence="4">
    <original>R</original>
    <variation>E</variation>
    <location>
        <position position="219"/>
    </location>
</feature>
<feature type="mutagenesis site" description="No visible phenotype." evidence="4">
    <original>R</original>
    <variation>E</variation>
    <location>
        <position position="220"/>
    </location>
</feature>
<feature type="strand" evidence="10">
    <location>
        <begin position="40"/>
        <end position="44"/>
    </location>
</feature>
<feature type="strand" evidence="10">
    <location>
        <begin position="51"/>
        <end position="57"/>
    </location>
</feature>
<feature type="strand" evidence="10">
    <location>
        <begin position="63"/>
        <end position="68"/>
    </location>
</feature>
<feature type="strand" evidence="10">
    <location>
        <begin position="72"/>
        <end position="81"/>
    </location>
</feature>
<feature type="strand" evidence="10">
    <location>
        <begin position="83"/>
        <end position="85"/>
    </location>
</feature>
<feature type="strand" evidence="10">
    <location>
        <begin position="90"/>
        <end position="92"/>
    </location>
</feature>
<feature type="strand" evidence="10">
    <location>
        <begin position="95"/>
        <end position="102"/>
    </location>
</feature>
<feature type="strand" evidence="10">
    <location>
        <begin position="105"/>
        <end position="111"/>
    </location>
</feature>
<feature type="strand" evidence="10">
    <location>
        <begin position="114"/>
        <end position="120"/>
    </location>
</feature>
<feature type="strand" evidence="10">
    <location>
        <begin position="138"/>
        <end position="145"/>
    </location>
</feature>
<feature type="strand" evidence="10">
    <location>
        <begin position="148"/>
        <end position="153"/>
    </location>
</feature>
<feature type="strand" evidence="10">
    <location>
        <begin position="158"/>
        <end position="163"/>
    </location>
</feature>
<feature type="strand" evidence="10">
    <location>
        <begin position="168"/>
        <end position="172"/>
    </location>
</feature>
<feature type="strand" evidence="10">
    <location>
        <begin position="182"/>
        <end position="184"/>
    </location>
</feature>
<feature type="strand" evidence="11">
    <location>
        <begin position="186"/>
        <end position="188"/>
    </location>
</feature>
<feature type="strand" evidence="10">
    <location>
        <begin position="190"/>
        <end position="193"/>
    </location>
</feature>
<feature type="strand" evidence="10">
    <location>
        <begin position="195"/>
        <end position="203"/>
    </location>
</feature>
<feature type="strand" evidence="10">
    <location>
        <begin position="211"/>
        <end position="214"/>
    </location>
</feature>
<feature type="strand" evidence="10">
    <location>
        <begin position="216"/>
        <end position="219"/>
    </location>
</feature>
<feature type="strand" evidence="10">
    <location>
        <begin position="221"/>
        <end position="226"/>
    </location>
</feature>
<feature type="strand" evidence="10">
    <location>
        <begin position="232"/>
        <end position="236"/>
    </location>
</feature>
<feature type="helix" evidence="11">
    <location>
        <begin position="237"/>
        <end position="239"/>
    </location>
</feature>
<feature type="strand" evidence="10">
    <location>
        <begin position="241"/>
        <end position="244"/>
    </location>
</feature>
<feature type="strand" evidence="10">
    <location>
        <begin position="246"/>
        <end position="248"/>
    </location>
</feature>
<feature type="turn" evidence="10">
    <location>
        <begin position="258"/>
        <end position="261"/>
    </location>
</feature>
<feature type="strand" evidence="10">
    <location>
        <begin position="268"/>
        <end position="275"/>
    </location>
</feature>
<feature type="strand" evidence="10">
    <location>
        <begin position="277"/>
        <end position="280"/>
    </location>
</feature>
<feature type="strand" evidence="10">
    <location>
        <begin position="286"/>
        <end position="295"/>
    </location>
</feature>
<feature type="turn" evidence="10">
    <location>
        <begin position="300"/>
        <end position="304"/>
    </location>
</feature>
<feature type="strand" evidence="11">
    <location>
        <begin position="305"/>
        <end position="307"/>
    </location>
</feature>
<feature type="strand" evidence="10">
    <location>
        <begin position="311"/>
        <end position="318"/>
    </location>
</feature>
<feature type="strand" evidence="10">
    <location>
        <begin position="320"/>
        <end position="323"/>
    </location>
</feature>
<feature type="strand" evidence="10">
    <location>
        <begin position="325"/>
        <end position="332"/>
    </location>
</feature>
<reference key="1">
    <citation type="journal article" date="1996" name="DNA Res.">
        <title>Sequence analysis of the genome of the unicellular cyanobacterium Synechocystis sp. strain PCC6803. II. Sequence determination of the entire genome and assignment of potential protein-coding regions.</title>
        <authorList>
            <person name="Kaneko T."/>
            <person name="Sato S."/>
            <person name="Kotani H."/>
            <person name="Tanaka A."/>
            <person name="Asamizu E."/>
            <person name="Nakamura Y."/>
            <person name="Miyajima N."/>
            <person name="Hirosawa M."/>
            <person name="Sugiura M."/>
            <person name="Sasamoto S."/>
            <person name="Kimura T."/>
            <person name="Hosouchi T."/>
            <person name="Matsuno A."/>
            <person name="Muraki A."/>
            <person name="Nakazaki N."/>
            <person name="Naruo K."/>
            <person name="Okumura S."/>
            <person name="Shimpo S."/>
            <person name="Takeuchi C."/>
            <person name="Wada T."/>
            <person name="Watanabe A."/>
            <person name="Yamada M."/>
            <person name="Yasuda M."/>
            <person name="Tabata S."/>
        </authorList>
    </citation>
    <scope>NUCLEOTIDE SEQUENCE [LARGE SCALE GENOMIC DNA]</scope>
    <source>
        <strain>ATCC 27184 / PCC 6803 / Kazusa</strain>
    </source>
</reference>
<reference key="2">
    <citation type="journal article" date="2021" name="Int. J. Mol. Sci.">
        <title>The Photosystem II Assembly Factor Ycf48 from the Cyanobacterium Synechocystis sp. PCC 6803 Is Lipidated Using an Atypical Lipobox Sequence.</title>
        <authorList>
            <person name="Knoppova J."/>
            <person name="Yu J."/>
            <person name="Janouskovec J."/>
            <person name="Halada P."/>
            <person name="Nixon P.J."/>
            <person name="Whitelegge J.P."/>
            <person name="Komenda J."/>
        </authorList>
    </citation>
    <scope>PROTEIN SEQUENCE OF 34-47; 52-76; 83-219; 222-253 AND 260-339</scope>
    <scope>SUBCELLULAR LOCATION</scope>
    <scope>PROBABLE PALMITOYLATION AT CYS-29</scope>
    <scope>PROBABLE DIACYLGLYCEROL AT CYS-29</scope>
    <scope>C-TERMINAL PROCESSING</scope>
    <scope>MASS SPECTROMETRY</scope>
    <scope>MUTAGENESIS OF 26-CYS--CYS-29; CYS-26 AND CYS-29</scope>
    <source>
        <strain>ATCC 27184 / PCC 6803 / Kazusa</strain>
    </source>
</reference>
<reference key="3">
    <citation type="journal article" date="2008" name="J. Biol. Chem.">
        <title>The cyanobacterial homologue of HCF136/YCF48 is a component of an early photosystem II assembly complex and is important for both the efficient assembly and repair of photosystem II in Synechocystis sp. PCC 6803.</title>
        <authorList>
            <person name="Komenda J."/>
            <person name="Nickelsen J."/>
            <person name="Tichy M."/>
            <person name="Prasil O."/>
            <person name="Eichacker L.A."/>
            <person name="Nixon P.J."/>
        </authorList>
    </citation>
    <scope>FUNCTION</scope>
    <scope>SUBUNIT</scope>
    <scope>SUBCELLULAR LOCATION</scope>
    <scope>DISRUPTION PHENOTYPE</scope>
    <source>
        <strain>ATCC 27184 / PCC 6803 / Kazusa</strain>
    </source>
</reference>
<reference key="4">
    <citation type="journal article" date="2014" name="Plant Cell">
        <title>Discovery of a chlorophyll binding protein complex involved in the early steps of photosystem II assembly in Synechocystis.</title>
        <authorList>
            <person name="Knoppova J."/>
            <person name="Sobotka R."/>
            <person name="Tichy M."/>
            <person name="Yu J."/>
            <person name="Konik P."/>
            <person name="Halada P."/>
            <person name="Nixon P.J."/>
            <person name="Komenda J."/>
        </authorList>
    </citation>
    <scope>FUNCTION</scope>
    <scope>SUBUNIT</scope>
    <scope>SUBCELLULAR LOCATION</scope>
    <source>
        <strain>ATCC 27184 / PCC 6803 / Kazusa</strain>
    </source>
</reference>
<reference key="5">
    <citation type="journal article" date="2018" name="Proc. Natl. Acad. Sci. U.S.A.">
        <title>Ycf48 involved in the biogenesis of the oxygen-evolving photosystem II complex is a seven-bladed beta-propeller protein.</title>
        <authorList>
            <person name="Yu J."/>
            <person name="Knoppova J."/>
            <person name="Michoux F."/>
            <person name="Bialek W."/>
            <person name="Cota E."/>
            <person name="Shukla M.K."/>
            <person name="Straskova A."/>
            <person name="Pascual Aznar G."/>
            <person name="Sobotka R."/>
            <person name="Komenda J."/>
            <person name="Murray J.W."/>
            <person name="Nixon P.J."/>
        </authorList>
    </citation>
    <scope>FUNCTION</scope>
    <scope>INTERACTION WITH YIDC</scope>
    <scope>SUBUNIT</scope>
    <scope>SUBCELLULAR LOCATION</scope>
    <scope>DOMAIN</scope>
    <scope>DISRUPTION PHENOTYPE</scope>
    <scope>MUTAGENESIS OF VAL-176; 196-ARG--ARG-219; 196-ARG--ARG-220; ARG-196; 215-ARG--ARG-220; ARG-215; ARG-219 AND ARG-220</scope>
    <source>
        <strain>ATCC 27184 / PCC 6803 / Kazusa</strain>
    </source>
</reference>
<keyword id="KW-0002">3D-structure</keyword>
<keyword id="KW-0903">Direct protein sequencing</keyword>
<keyword id="KW-0449">Lipoprotein</keyword>
<keyword id="KW-0472">Membrane</keyword>
<keyword id="KW-0564">Palmitate</keyword>
<keyword id="KW-0602">Photosynthesis</keyword>
<keyword id="KW-0604">Photosystem II</keyword>
<keyword id="KW-1185">Reference proteome</keyword>
<keyword id="KW-0732">Signal</keyword>
<keyword id="KW-0793">Thylakoid</keyword>
<name>YCF48_SYNY3</name>